<accession>Q73DA4</accession>
<gene>
    <name evidence="1" type="primary">kdpA</name>
    <name type="ordered locus">BCE_0809</name>
</gene>
<dbReference type="EMBL" id="AE017194">
    <property type="protein sequence ID" value="AAS39741.1"/>
    <property type="molecule type" value="Genomic_DNA"/>
</dbReference>
<dbReference type="SMR" id="Q73DA4"/>
<dbReference type="KEGG" id="bca:BCE_0809"/>
<dbReference type="HOGENOM" id="CLU_018614_3_0_9"/>
<dbReference type="Proteomes" id="UP000002527">
    <property type="component" value="Chromosome"/>
</dbReference>
<dbReference type="GO" id="GO:0005886">
    <property type="term" value="C:plasma membrane"/>
    <property type="evidence" value="ECO:0007669"/>
    <property type="project" value="UniProtKB-SubCell"/>
</dbReference>
<dbReference type="GO" id="GO:0008556">
    <property type="term" value="F:P-type potassium transmembrane transporter activity"/>
    <property type="evidence" value="ECO:0007669"/>
    <property type="project" value="InterPro"/>
</dbReference>
<dbReference type="GO" id="GO:0030955">
    <property type="term" value="F:potassium ion binding"/>
    <property type="evidence" value="ECO:0007669"/>
    <property type="project" value="UniProtKB-UniRule"/>
</dbReference>
<dbReference type="HAMAP" id="MF_00275">
    <property type="entry name" value="KdpA"/>
    <property type="match status" value="1"/>
</dbReference>
<dbReference type="InterPro" id="IPR004623">
    <property type="entry name" value="KdpA"/>
</dbReference>
<dbReference type="NCBIfam" id="TIGR00680">
    <property type="entry name" value="kdpA"/>
    <property type="match status" value="1"/>
</dbReference>
<dbReference type="PANTHER" id="PTHR30607">
    <property type="entry name" value="POTASSIUM-TRANSPORTING ATPASE A CHAIN"/>
    <property type="match status" value="1"/>
</dbReference>
<dbReference type="PANTHER" id="PTHR30607:SF2">
    <property type="entry name" value="POTASSIUM-TRANSPORTING ATPASE POTASSIUM-BINDING SUBUNIT"/>
    <property type="match status" value="1"/>
</dbReference>
<dbReference type="Pfam" id="PF03814">
    <property type="entry name" value="KdpA"/>
    <property type="match status" value="1"/>
</dbReference>
<dbReference type="PIRSF" id="PIRSF001294">
    <property type="entry name" value="K_ATPaseA"/>
    <property type="match status" value="1"/>
</dbReference>
<reference key="1">
    <citation type="journal article" date="2004" name="Nucleic Acids Res.">
        <title>The genome sequence of Bacillus cereus ATCC 10987 reveals metabolic adaptations and a large plasmid related to Bacillus anthracis pXO1.</title>
        <authorList>
            <person name="Rasko D.A."/>
            <person name="Ravel J."/>
            <person name="Oekstad O.A."/>
            <person name="Helgason E."/>
            <person name="Cer R.Z."/>
            <person name="Jiang L."/>
            <person name="Shores K.A."/>
            <person name="Fouts D.E."/>
            <person name="Tourasse N.J."/>
            <person name="Angiuoli S.V."/>
            <person name="Kolonay J.F."/>
            <person name="Nelson W.C."/>
            <person name="Kolstoe A.-B."/>
            <person name="Fraser C.M."/>
            <person name="Read T.D."/>
        </authorList>
    </citation>
    <scope>NUCLEOTIDE SEQUENCE [LARGE SCALE GENOMIC DNA]</scope>
    <source>
        <strain>ATCC 10987 / NRS 248</strain>
    </source>
</reference>
<evidence type="ECO:0000255" key="1">
    <source>
        <dbReference type="HAMAP-Rule" id="MF_00275"/>
    </source>
</evidence>
<comment type="function">
    <text evidence="1">Part of the high-affinity ATP-driven potassium transport (or Kdp) system, which catalyzes the hydrolysis of ATP coupled with the electrogenic transport of potassium into the cytoplasm. This subunit binds the extracellular potassium ions and delivers the ions to the membrane domain of KdpB through an intramembrane tunnel.</text>
</comment>
<comment type="subunit">
    <text evidence="1">The system is composed of three essential subunits: KdpA, KdpB and KdpC.</text>
</comment>
<comment type="subcellular location">
    <subcellularLocation>
        <location evidence="1">Cell membrane</location>
        <topology evidence="1">Multi-pass membrane protein</topology>
    </subcellularLocation>
</comment>
<comment type="similarity">
    <text evidence="1">Belongs to the KdpA family.</text>
</comment>
<name>KDPA_BACC1</name>
<sequence>MIWVAVVITMLLFILVAKPTGIYLEKAFQGSKKLDKVFGPFEKLIFKITGVKEYNQTWKQYALSLVLLNGFMIVVVYFVFRLQGVLPLNPANIKGMEPTLAFNTAISFMADTNLQHYSGENGLSYLSQLIGITFLMFAAPATTLALVMAFIRGLAGKELGNFFVDFTRALTRVFLPIAFMAALVFVALGVPQTLDGVVTAQTIDGAKQSILRGPVASFVSIKELGNNGGGFFGANSTHPFENPGQMSNILQMMLMMLLPTALPFTYGRMVGNKKQGRILFVSLFMVFLLGFITITTSELNGNPVLNGMGIEHVQGSTEGKEVRFGTVFSSLYATVTTAAETGAVNTMHDTLTPIGGLVPLVNMMLNTVYGGVGAGFVNIIMYAIIAVFISGLMVGRTPEFLGKKIEGKEMKLIAVTILFHPLLILGFSALALSTHLGTEAISNSGFHGLTQVVYEYTSSAANNGSGFEGLADNTPFWNITTGLVMFLGRYFSLITMLAVAASLKEKTVVPETVGTFRTDNSLFGGIFIGTIVIVGALTFFPMLVLGPIAEFLTLK</sequence>
<protein>
    <recommendedName>
        <fullName evidence="1">Potassium-transporting ATPase potassium-binding subunit</fullName>
    </recommendedName>
    <alternativeName>
        <fullName evidence="1">ATP phosphohydrolase [potassium-transporting] A chain</fullName>
    </alternativeName>
    <alternativeName>
        <fullName evidence="1">Potassium-binding and translocating subunit A</fullName>
    </alternativeName>
    <alternativeName>
        <fullName evidence="1">Potassium-translocating ATPase A chain</fullName>
    </alternativeName>
</protein>
<keyword id="KW-1003">Cell membrane</keyword>
<keyword id="KW-0406">Ion transport</keyword>
<keyword id="KW-0472">Membrane</keyword>
<keyword id="KW-0630">Potassium</keyword>
<keyword id="KW-0633">Potassium transport</keyword>
<keyword id="KW-0812">Transmembrane</keyword>
<keyword id="KW-1133">Transmembrane helix</keyword>
<keyword id="KW-0813">Transport</keyword>
<feature type="chain" id="PRO_0000166478" description="Potassium-transporting ATPase potassium-binding subunit">
    <location>
        <begin position="1"/>
        <end position="555"/>
    </location>
</feature>
<feature type="transmembrane region" description="Helical" evidence="1">
    <location>
        <begin position="2"/>
        <end position="22"/>
    </location>
</feature>
<feature type="transmembrane region" description="Helical" evidence="1">
    <location>
        <begin position="60"/>
        <end position="80"/>
    </location>
</feature>
<feature type="transmembrane region" description="Helical" evidence="1">
    <location>
        <begin position="130"/>
        <end position="150"/>
    </location>
</feature>
<feature type="transmembrane region" description="Helical" evidence="1">
    <location>
        <begin position="173"/>
        <end position="193"/>
    </location>
</feature>
<feature type="transmembrane region" description="Helical" evidence="1">
    <location>
        <begin position="246"/>
        <end position="266"/>
    </location>
</feature>
<feature type="transmembrane region" description="Helical" evidence="1">
    <location>
        <begin position="278"/>
        <end position="298"/>
    </location>
</feature>
<feature type="transmembrane region" description="Helical" evidence="1">
    <location>
        <begin position="374"/>
        <end position="394"/>
    </location>
</feature>
<feature type="transmembrane region" description="Helical" evidence="1">
    <location>
        <begin position="412"/>
        <end position="432"/>
    </location>
</feature>
<feature type="transmembrane region" description="Helical" evidence="1">
    <location>
        <begin position="483"/>
        <end position="503"/>
    </location>
</feature>
<feature type="transmembrane region" description="Helical" evidence="1">
    <location>
        <begin position="525"/>
        <end position="545"/>
    </location>
</feature>
<organism>
    <name type="scientific">Bacillus cereus (strain ATCC 10987 / NRS 248)</name>
    <dbReference type="NCBI Taxonomy" id="222523"/>
    <lineage>
        <taxon>Bacteria</taxon>
        <taxon>Bacillati</taxon>
        <taxon>Bacillota</taxon>
        <taxon>Bacilli</taxon>
        <taxon>Bacillales</taxon>
        <taxon>Bacillaceae</taxon>
        <taxon>Bacillus</taxon>
        <taxon>Bacillus cereus group</taxon>
    </lineage>
</organism>
<proteinExistence type="inferred from homology"/>